<sequence>MTDTYNSISNFIENELTALLSSDDYLMDDLAGELPNEVCRLLKAQVIEKRKDAMSRGKQDLLSKEIYDNESELRASQSQQIMELVGDIPKYSLGSELRNRVEGEPQSTSIERLIEDVLKLPQMEVADEEEVEVENDLKVLSEYSNLRKDLILKCQALQIGESKLSDILSQTNSINSLTTSIKEASEDDDISEYFATYNGKLVVALEEMKLLLEEAVKTFGNSPEKREKIKKILSELKK</sequence>
<protein>
    <recommendedName>
        <fullName evidence="5">Inner kinetochore subunit NKP1</fullName>
    </recommendedName>
    <alternativeName>
        <fullName evidence="5">Constitutive centromere-associated network protein NKP1</fullName>
    </alternativeName>
    <alternativeName>
        <fullName>Non-essential kinetochore protein 1</fullName>
    </alternativeName>
</protein>
<reference key="1">
    <citation type="journal article" date="1997" name="Nature">
        <title>The nucleotide sequence of Saccharomyces cerevisiae chromosome IV.</title>
        <authorList>
            <person name="Jacq C."/>
            <person name="Alt-Moerbe J."/>
            <person name="Andre B."/>
            <person name="Arnold W."/>
            <person name="Bahr A."/>
            <person name="Ballesta J.P.G."/>
            <person name="Bargues M."/>
            <person name="Baron L."/>
            <person name="Becker A."/>
            <person name="Biteau N."/>
            <person name="Bloecker H."/>
            <person name="Blugeon C."/>
            <person name="Boskovic J."/>
            <person name="Brandt P."/>
            <person name="Brueckner M."/>
            <person name="Buitrago M.J."/>
            <person name="Coster F."/>
            <person name="Delaveau T."/>
            <person name="del Rey F."/>
            <person name="Dujon B."/>
            <person name="Eide L.G."/>
            <person name="Garcia-Cantalejo J.M."/>
            <person name="Goffeau A."/>
            <person name="Gomez-Peris A."/>
            <person name="Granotier C."/>
            <person name="Hanemann V."/>
            <person name="Hankeln T."/>
            <person name="Hoheisel J.D."/>
            <person name="Jaeger W."/>
            <person name="Jimenez A."/>
            <person name="Jonniaux J.-L."/>
            <person name="Kraemer C."/>
            <person name="Kuester H."/>
            <person name="Laamanen P."/>
            <person name="Legros Y."/>
            <person name="Louis E.J."/>
            <person name="Moeller-Rieker S."/>
            <person name="Monnet A."/>
            <person name="Moro M."/>
            <person name="Mueller-Auer S."/>
            <person name="Nussbaumer B."/>
            <person name="Paricio N."/>
            <person name="Paulin L."/>
            <person name="Perea J."/>
            <person name="Perez-Alonso M."/>
            <person name="Perez-Ortin J.E."/>
            <person name="Pohl T.M."/>
            <person name="Prydz H."/>
            <person name="Purnelle B."/>
            <person name="Rasmussen S.W."/>
            <person name="Remacha M.A."/>
            <person name="Revuelta J.L."/>
            <person name="Rieger M."/>
            <person name="Salom D."/>
            <person name="Saluz H.P."/>
            <person name="Saiz J.E."/>
            <person name="Saren A.-M."/>
            <person name="Schaefer M."/>
            <person name="Scharfe M."/>
            <person name="Schmidt E.R."/>
            <person name="Schneider C."/>
            <person name="Scholler P."/>
            <person name="Schwarz S."/>
            <person name="Soler-Mira A."/>
            <person name="Urrestarazu L.A."/>
            <person name="Verhasselt P."/>
            <person name="Vissers S."/>
            <person name="Voet M."/>
            <person name="Volckaert G."/>
            <person name="Wagner G."/>
            <person name="Wambutt R."/>
            <person name="Wedler E."/>
            <person name="Wedler H."/>
            <person name="Woelfl S."/>
            <person name="Harris D.E."/>
            <person name="Bowman S."/>
            <person name="Brown D."/>
            <person name="Churcher C.M."/>
            <person name="Connor R."/>
            <person name="Dedman K."/>
            <person name="Gentles S."/>
            <person name="Hamlin N."/>
            <person name="Hunt S."/>
            <person name="Jones L."/>
            <person name="McDonald S."/>
            <person name="Murphy L.D."/>
            <person name="Niblett D."/>
            <person name="Odell C."/>
            <person name="Oliver K."/>
            <person name="Rajandream M.A."/>
            <person name="Richards C."/>
            <person name="Shore L."/>
            <person name="Walsh S.V."/>
            <person name="Barrell B.G."/>
            <person name="Dietrich F.S."/>
            <person name="Mulligan J.T."/>
            <person name="Allen E."/>
            <person name="Araujo R."/>
            <person name="Aviles E."/>
            <person name="Berno A."/>
            <person name="Carpenter J."/>
            <person name="Chen E."/>
            <person name="Cherry J.M."/>
            <person name="Chung E."/>
            <person name="Duncan M."/>
            <person name="Hunicke-Smith S."/>
            <person name="Hyman R.W."/>
            <person name="Komp C."/>
            <person name="Lashkari D."/>
            <person name="Lew H."/>
            <person name="Lin D."/>
            <person name="Mosedale D."/>
            <person name="Nakahara K."/>
            <person name="Namath A."/>
            <person name="Oefner P."/>
            <person name="Oh C."/>
            <person name="Petel F.X."/>
            <person name="Roberts D."/>
            <person name="Schramm S."/>
            <person name="Schroeder M."/>
            <person name="Shogren T."/>
            <person name="Shroff N."/>
            <person name="Winant A."/>
            <person name="Yelton M.A."/>
            <person name="Botstein D."/>
            <person name="Davis R.W."/>
            <person name="Johnston M."/>
            <person name="Andrews S."/>
            <person name="Brinkman R."/>
            <person name="Cooper J."/>
            <person name="Ding H."/>
            <person name="Du Z."/>
            <person name="Favello A."/>
            <person name="Fulton L."/>
            <person name="Gattung S."/>
            <person name="Greco T."/>
            <person name="Hallsworth K."/>
            <person name="Hawkins J."/>
            <person name="Hillier L.W."/>
            <person name="Jier M."/>
            <person name="Johnson D."/>
            <person name="Johnston L."/>
            <person name="Kirsten J."/>
            <person name="Kucaba T."/>
            <person name="Langston Y."/>
            <person name="Latreille P."/>
            <person name="Le T."/>
            <person name="Mardis E."/>
            <person name="Menezes S."/>
            <person name="Miller N."/>
            <person name="Nhan M."/>
            <person name="Pauley A."/>
            <person name="Peluso D."/>
            <person name="Rifkin L."/>
            <person name="Riles L."/>
            <person name="Taich A."/>
            <person name="Trevaskis E."/>
            <person name="Vignati D."/>
            <person name="Wilcox L."/>
            <person name="Wohldman P."/>
            <person name="Vaudin M."/>
            <person name="Wilson R."/>
            <person name="Waterston R."/>
            <person name="Albermann K."/>
            <person name="Hani J."/>
            <person name="Heumann K."/>
            <person name="Kleine K."/>
            <person name="Mewes H.-W."/>
            <person name="Zollner A."/>
            <person name="Zaccaria P."/>
        </authorList>
    </citation>
    <scope>NUCLEOTIDE SEQUENCE [LARGE SCALE GENOMIC DNA]</scope>
    <source>
        <strain>ATCC 204508 / S288c</strain>
    </source>
</reference>
<reference key="2">
    <citation type="journal article" date="2014" name="G3 (Bethesda)">
        <title>The reference genome sequence of Saccharomyces cerevisiae: Then and now.</title>
        <authorList>
            <person name="Engel S.R."/>
            <person name="Dietrich F.S."/>
            <person name="Fisk D.G."/>
            <person name="Binkley G."/>
            <person name="Balakrishnan R."/>
            <person name="Costanzo M.C."/>
            <person name="Dwight S.S."/>
            <person name="Hitz B.C."/>
            <person name="Karra K."/>
            <person name="Nash R.S."/>
            <person name="Weng S."/>
            <person name="Wong E.D."/>
            <person name="Lloyd P."/>
            <person name="Skrzypek M.S."/>
            <person name="Miyasato S.R."/>
            <person name="Simison M."/>
            <person name="Cherry J.M."/>
        </authorList>
    </citation>
    <scope>GENOME REANNOTATION</scope>
    <source>
        <strain>ATCC 204508 / S288c</strain>
    </source>
</reference>
<reference key="3">
    <citation type="journal article" date="2003" name="Mol. Cell">
        <title>Assigning function to yeast proteins by integration of technologies.</title>
        <authorList>
            <person name="Hazbun T.R."/>
            <person name="Malmstroem L."/>
            <person name="Anderson S."/>
            <person name="Graczyk B.J."/>
            <person name="Fox B."/>
            <person name="Riffle M."/>
            <person name="Sundin B.A."/>
            <person name="Aranda J.D."/>
            <person name="McDonald W.H."/>
            <person name="Chiu C.-H."/>
            <person name="Snydsman B.E."/>
            <person name="Bradley P."/>
            <person name="Muller E.G.D."/>
            <person name="Fields S."/>
            <person name="Baker D."/>
            <person name="Yates J.R. III"/>
            <person name="Davis T.N."/>
        </authorList>
    </citation>
    <scope>IDENTIFICATION BY MASS SPECTROMETRY</scope>
</reference>
<reference key="4">
    <citation type="journal article" date="2003" name="Nature">
        <title>Sequencing and comparison of yeast species to identify genes and regulatory elements.</title>
        <authorList>
            <person name="Kellis M."/>
            <person name="Patterson N."/>
            <person name="Endrizzi M."/>
            <person name="Birren B.W."/>
            <person name="Lander E.S."/>
        </authorList>
    </citation>
    <scope>IDENTIFICATION OF PROBABLE INITIATION SITE</scope>
</reference>
<reference key="5">
    <citation type="journal article" date="2002" name="Cell">
        <title>Phospho-regulation of kinetochore-microtubule attachments by the Aurora kinase Ipl1p.</title>
        <authorList>
            <person name="Cheeseman I.M."/>
            <person name="Anderson S."/>
            <person name="Jwa M."/>
            <person name="Green E.M."/>
            <person name="Kang J.-S."/>
            <person name="Yates J.R. III"/>
            <person name="Chan C.S.M."/>
            <person name="Drubin D.G."/>
            <person name="Barnes G."/>
        </authorList>
    </citation>
    <scope>IDENTIFICATION BY MASS SPECTROMETRY</scope>
    <scope>COMPONENT OF CENTRAL KINETOCHORE COMPLEX</scope>
    <scope>SUBCELLULAR LOCATION</scope>
</reference>
<reference key="6">
    <citation type="journal article" date="2008" name="Mol. Cell. Proteomics">
        <title>A multidimensional chromatography technology for in-depth phosphoproteome analysis.</title>
        <authorList>
            <person name="Albuquerque C.P."/>
            <person name="Smolka M.B."/>
            <person name="Payne S.H."/>
            <person name="Bafna V."/>
            <person name="Eng J."/>
            <person name="Zhou H."/>
        </authorList>
    </citation>
    <scope>PHOSPHORYLATION [LARGE SCALE ANALYSIS] AT SER-222</scope>
    <scope>IDENTIFICATION BY MASS SPECTROMETRY [LARGE SCALE ANALYSIS]</scope>
</reference>
<reference key="7">
    <citation type="journal article" date="2012" name="Nat. Cell Biol.">
        <title>CENP-T proteins are conserved centromere receptors of the Ndc80 complex.</title>
        <authorList>
            <person name="Schleiffer A."/>
            <person name="Maier M."/>
            <person name="Litos G."/>
            <person name="Lampert F."/>
            <person name="Hornung P."/>
            <person name="Mechtler K."/>
            <person name="Westermann S."/>
        </authorList>
    </citation>
    <scope>IDENTIFICATION IN CCAN</scope>
    <scope>SUBUNIT</scope>
</reference>
<reference key="8">
    <citation type="journal article" date="2017" name="EMBO J.">
        <title>Molecular basis for inner kinetochore configuration through RWD domain-peptide interactions.</title>
        <authorList>
            <person name="Schmitzberger F."/>
            <person name="Richter M.M."/>
            <person name="Gordiyenko Y."/>
            <person name="Robinson C.V."/>
            <person name="Dadlez M."/>
            <person name="Westermann S."/>
        </authorList>
    </citation>
    <scope>SUBCELLULAR LOCATION</scope>
</reference>
<comment type="function">
    <text evidence="3">Component of the kinetochore, a multiprotein complex that assembles on centromeric DNA and attaches chromosomes to spindle microtubules, mediating chromosome segregation and sister chromatid segregation during meiosis and mitosis. Component of the inner kinetochore constitutive centromere-associated network (CCAN), which serves as a structural platform for outer kinetochore assembly.</text>
</comment>
<comment type="subunit">
    <text evidence="1 3">Component of the inner kinetochore constitutive centromere-associated network (CCAN) (also known as central kinetochore CTF19 complex in yeast), which is composed of at least AME1, CHL4, CNN1, CTF3, CTF19, IML3, MCM16, MCM21, MCM22, MHF1, MHF2, MIF2, NKP1, NKP2, OKP1 and WIP1 (PubMed:22561346). NKP1 interacts directly with OKP1 and AME1 (By similarity).</text>
</comment>
<comment type="interaction">
    <interactant intactId="EBI-35840">
        <id>Q12493</id>
    </interactant>
    <interactant intactId="EBI-34256">
        <id>Q06162</id>
        <label>NKP2</label>
    </interactant>
    <organismsDiffer>false</organismsDiffer>
    <experiments>4</experiments>
</comment>
<comment type="subcellular location">
    <subcellularLocation>
        <location evidence="2">Nucleus</location>
    </subcellularLocation>
    <subcellularLocation>
        <location evidence="2 4">Chromosome</location>
        <location evidence="2 4">Centromere</location>
        <location evidence="2 4">Kinetochore</location>
    </subcellularLocation>
    <text>Associated with kinetochores.</text>
</comment>
<comment type="similarity">
    <text evidence="5">Belongs to the NKP1 family.</text>
</comment>
<comment type="sequence caution" evidence="5">
    <conflict type="erroneous initiation">
        <sequence resource="EMBL-CDS" id="AAB64819"/>
    </conflict>
</comment>
<comment type="sequence caution" evidence="5">
    <conflict type="erroneous initiation">
        <sequence resource="EMBL-CDS" id="AAB64825"/>
    </conflict>
</comment>
<gene>
    <name type="primary">NKP1</name>
    <name type="ordered locus">YDR383C</name>
</gene>
<dbReference type="EMBL" id="U28373">
    <property type="protein sequence ID" value="AAB64819.1"/>
    <property type="status" value="ALT_INIT"/>
    <property type="molecule type" value="Genomic_DNA"/>
</dbReference>
<dbReference type="EMBL" id="U32274">
    <property type="protein sequence ID" value="AAB64825.1"/>
    <property type="status" value="ALT_INIT"/>
    <property type="molecule type" value="Genomic_DNA"/>
</dbReference>
<dbReference type="EMBL" id="BK006938">
    <property type="protein sequence ID" value="DAA12227.1"/>
    <property type="molecule type" value="Genomic_DNA"/>
</dbReference>
<dbReference type="PIR" id="S61178">
    <property type="entry name" value="S61178"/>
</dbReference>
<dbReference type="RefSeq" id="NP_010671.4">
    <property type="nucleotide sequence ID" value="NM_001180691.3"/>
</dbReference>
<dbReference type="PDB" id="6NUW">
    <property type="method" value="EM"/>
    <property type="resolution" value="4.25 A"/>
    <property type="chains" value="G=1-238"/>
</dbReference>
<dbReference type="PDB" id="6QLD">
    <property type="method" value="EM"/>
    <property type="resolution" value="4.15 A"/>
    <property type="chains" value="Y=2-238"/>
</dbReference>
<dbReference type="PDB" id="6QLE">
    <property type="method" value="EM"/>
    <property type="resolution" value="3.55 A"/>
    <property type="chains" value="Y=1-238"/>
</dbReference>
<dbReference type="PDB" id="6QLF">
    <property type="method" value="EM"/>
    <property type="resolution" value="3.45 A"/>
    <property type="chains" value="Y=1-238"/>
</dbReference>
<dbReference type="PDB" id="8OVW">
    <property type="method" value="EM"/>
    <property type="resolution" value="3.40 A"/>
    <property type="chains" value="Y=1-238"/>
</dbReference>
<dbReference type="PDB" id="8OVX">
    <property type="method" value="EM"/>
    <property type="resolution" value="3.40 A"/>
    <property type="chains" value="Y=1-238"/>
</dbReference>
<dbReference type="PDB" id="8OW0">
    <property type="method" value="EM"/>
    <property type="resolution" value="3.40 A"/>
    <property type="chains" value="Y=1-238"/>
</dbReference>
<dbReference type="PDB" id="8OW1">
    <property type="method" value="EM"/>
    <property type="resolution" value="3.70 A"/>
    <property type="chains" value="Y/YY=1-238"/>
</dbReference>
<dbReference type="PDBsum" id="6NUW"/>
<dbReference type="PDBsum" id="6QLD"/>
<dbReference type="PDBsum" id="6QLE"/>
<dbReference type="PDBsum" id="6QLF"/>
<dbReference type="PDBsum" id="8OVW"/>
<dbReference type="PDBsum" id="8OVX"/>
<dbReference type="PDBsum" id="8OW0"/>
<dbReference type="PDBsum" id="8OW1"/>
<dbReference type="EMDB" id="EMD-0523"/>
<dbReference type="EMDB" id="EMD-17224"/>
<dbReference type="EMDB" id="EMD-17225"/>
<dbReference type="EMDB" id="EMD-17226"/>
<dbReference type="EMDB" id="EMD-17227"/>
<dbReference type="EMDB" id="EMD-4579"/>
<dbReference type="EMDB" id="EMD-4580"/>
<dbReference type="EMDB" id="EMD-4581"/>
<dbReference type="SMR" id="Q12493"/>
<dbReference type="BioGRID" id="32444">
    <property type="interactions" value="83"/>
</dbReference>
<dbReference type="ComplexPortal" id="CPX-1156">
    <property type="entry name" value="Central kinetochore CTF19 complex"/>
</dbReference>
<dbReference type="ComplexPortal" id="CPX-2533">
    <property type="entry name" value="Kinetochore CCAN complex"/>
</dbReference>
<dbReference type="DIP" id="DIP-1940N"/>
<dbReference type="FunCoup" id="Q12493">
    <property type="interactions" value="86"/>
</dbReference>
<dbReference type="IntAct" id="Q12493">
    <property type="interactions" value="14"/>
</dbReference>
<dbReference type="MINT" id="Q12493"/>
<dbReference type="STRING" id="4932.YDR383C"/>
<dbReference type="iPTMnet" id="Q12493"/>
<dbReference type="PaxDb" id="4932-YDR383C"/>
<dbReference type="PeptideAtlas" id="Q12493"/>
<dbReference type="EnsemblFungi" id="YDR383C_mRNA">
    <property type="protein sequence ID" value="YDR383C"/>
    <property type="gene ID" value="YDR383C"/>
</dbReference>
<dbReference type="GeneID" id="851991"/>
<dbReference type="KEGG" id="sce:YDR383C"/>
<dbReference type="AGR" id="SGD:S000002791"/>
<dbReference type="SGD" id="S000002791">
    <property type="gene designation" value="NKP1"/>
</dbReference>
<dbReference type="VEuPathDB" id="FungiDB:YDR383C"/>
<dbReference type="eggNOG" id="ENOG502S64F">
    <property type="taxonomic scope" value="Eukaryota"/>
</dbReference>
<dbReference type="HOGENOM" id="CLU_101503_0_0_1"/>
<dbReference type="InParanoid" id="Q12493"/>
<dbReference type="OMA" id="YELENEW"/>
<dbReference type="OrthoDB" id="4067856at2759"/>
<dbReference type="BioCyc" id="YEAST:G3O-29931-MONOMER"/>
<dbReference type="BioGRID-ORCS" id="851991">
    <property type="hits" value="1 hit in 10 CRISPR screens"/>
</dbReference>
<dbReference type="ChiTaRS" id="NKP1">
    <property type="organism name" value="yeast"/>
</dbReference>
<dbReference type="PRO" id="PR:Q12493"/>
<dbReference type="Proteomes" id="UP000002311">
    <property type="component" value="Chromosome IV"/>
</dbReference>
<dbReference type="RNAct" id="Q12493">
    <property type="molecule type" value="protein"/>
</dbReference>
<dbReference type="GO" id="GO:0000776">
    <property type="term" value="C:kinetochore"/>
    <property type="evidence" value="ECO:0000314"/>
    <property type="project" value="SGD"/>
</dbReference>
<dbReference type="GO" id="GO:0005634">
    <property type="term" value="C:nucleus"/>
    <property type="evidence" value="ECO:0007669"/>
    <property type="project" value="UniProtKB-SubCell"/>
</dbReference>
<dbReference type="GO" id="GO:0008608">
    <property type="term" value="P:attachment of spindle microtubules to kinetochore"/>
    <property type="evidence" value="ECO:0000303"/>
    <property type="project" value="ComplexPortal"/>
</dbReference>
<dbReference type="GO" id="GO:0051301">
    <property type="term" value="P:cell division"/>
    <property type="evidence" value="ECO:0007669"/>
    <property type="project" value="UniProtKB-KW"/>
</dbReference>
<dbReference type="GO" id="GO:0051321">
    <property type="term" value="P:meiotic cell cycle"/>
    <property type="evidence" value="ECO:0007669"/>
    <property type="project" value="UniProtKB-KW"/>
</dbReference>
<proteinExistence type="evidence at protein level"/>
<evidence type="ECO:0000250" key="1">
    <source>
        <dbReference type="UniProtKB" id="Q6CPR4"/>
    </source>
</evidence>
<evidence type="ECO:0000269" key="2">
    <source>
    </source>
</evidence>
<evidence type="ECO:0000269" key="3">
    <source>
    </source>
</evidence>
<evidence type="ECO:0000269" key="4">
    <source>
    </source>
</evidence>
<evidence type="ECO:0000305" key="5"/>
<evidence type="ECO:0007744" key="6">
    <source>
    </source>
</evidence>
<evidence type="ECO:0007829" key="7">
    <source>
        <dbReference type="PDB" id="6QLF"/>
    </source>
</evidence>
<evidence type="ECO:0007829" key="8">
    <source>
        <dbReference type="PDB" id="8OVW"/>
    </source>
</evidence>
<evidence type="ECO:0007829" key="9">
    <source>
        <dbReference type="PDB" id="8OVX"/>
    </source>
</evidence>
<evidence type="ECO:0007829" key="10">
    <source>
        <dbReference type="PDB" id="8OW0"/>
    </source>
</evidence>
<keyword id="KW-0002">3D-structure</keyword>
<keyword id="KW-0131">Cell cycle</keyword>
<keyword id="KW-0132">Cell division</keyword>
<keyword id="KW-0137">Centromere</keyword>
<keyword id="KW-0158">Chromosome</keyword>
<keyword id="KW-0995">Kinetochore</keyword>
<keyword id="KW-0469">Meiosis</keyword>
<keyword id="KW-0498">Mitosis</keyword>
<keyword id="KW-0539">Nucleus</keyword>
<keyword id="KW-0597">Phosphoprotein</keyword>
<keyword id="KW-1185">Reference proteome</keyword>
<name>NKP1_YEAST</name>
<accession>Q12493</accession>
<accession>D6VT17</accession>
<feature type="chain" id="PRO_0000096867" description="Inner kinetochore subunit NKP1">
    <location>
        <begin position="1"/>
        <end position="238"/>
    </location>
</feature>
<feature type="modified residue" description="Phosphoserine" evidence="6">
    <location>
        <position position="222"/>
    </location>
</feature>
<feature type="helix" evidence="8">
    <location>
        <begin position="4"/>
        <end position="15"/>
    </location>
</feature>
<feature type="helix" evidence="8">
    <location>
        <begin position="18"/>
        <end position="29"/>
    </location>
</feature>
<feature type="helix" evidence="8">
    <location>
        <begin position="36"/>
        <end position="49"/>
    </location>
</feature>
<feature type="turn" evidence="8">
    <location>
        <begin position="50"/>
        <end position="53"/>
    </location>
</feature>
<feature type="helix" evidence="8">
    <location>
        <begin position="56"/>
        <end position="83"/>
    </location>
</feature>
<feature type="strand" evidence="10">
    <location>
        <begin position="86"/>
        <end position="89"/>
    </location>
</feature>
<feature type="strand" evidence="7">
    <location>
        <begin position="90"/>
        <end position="93"/>
    </location>
</feature>
<feature type="helix" evidence="8">
    <location>
        <begin position="95"/>
        <end position="101"/>
    </location>
</feature>
<feature type="strand" evidence="10">
    <location>
        <begin position="106"/>
        <end position="108"/>
    </location>
</feature>
<feature type="helix" evidence="8">
    <location>
        <begin position="110"/>
        <end position="118"/>
    </location>
</feature>
<feature type="helix" evidence="8">
    <location>
        <begin position="137"/>
        <end position="185"/>
    </location>
</feature>
<feature type="strand" evidence="9">
    <location>
        <begin position="186"/>
        <end position="188"/>
    </location>
</feature>
<feature type="helix" evidence="8">
    <location>
        <begin position="192"/>
        <end position="218"/>
    </location>
</feature>
<feature type="helix" evidence="8">
    <location>
        <begin position="223"/>
        <end position="237"/>
    </location>
</feature>
<organism>
    <name type="scientific">Saccharomyces cerevisiae (strain ATCC 204508 / S288c)</name>
    <name type="common">Baker's yeast</name>
    <dbReference type="NCBI Taxonomy" id="559292"/>
    <lineage>
        <taxon>Eukaryota</taxon>
        <taxon>Fungi</taxon>
        <taxon>Dikarya</taxon>
        <taxon>Ascomycota</taxon>
        <taxon>Saccharomycotina</taxon>
        <taxon>Saccharomycetes</taxon>
        <taxon>Saccharomycetales</taxon>
        <taxon>Saccharomycetaceae</taxon>
        <taxon>Saccharomyces</taxon>
    </lineage>
</organism>